<protein>
    <recommendedName>
        <fullName evidence="1">Queuine tRNA-ribosyltransferase</fullName>
        <ecNumber evidence="1">2.4.2.29</ecNumber>
    </recommendedName>
    <alternativeName>
        <fullName evidence="1">Guanine insertion enzyme</fullName>
    </alternativeName>
    <alternativeName>
        <fullName evidence="1">tRNA-guanine transglycosylase</fullName>
    </alternativeName>
</protein>
<name>TGT_RUEST</name>
<gene>
    <name evidence="1" type="primary">tgt</name>
    <name type="ordered locus">TM1040_0770</name>
</gene>
<accession>Q1GIL3</accession>
<dbReference type="EC" id="2.4.2.29" evidence="1"/>
<dbReference type="EMBL" id="CP000377">
    <property type="protein sequence ID" value="ABF63503.1"/>
    <property type="molecule type" value="Genomic_DNA"/>
</dbReference>
<dbReference type="RefSeq" id="WP_011538115.1">
    <property type="nucleotide sequence ID" value="NC_008044.1"/>
</dbReference>
<dbReference type="SMR" id="Q1GIL3"/>
<dbReference type="STRING" id="292414.TM1040_0770"/>
<dbReference type="KEGG" id="sit:TM1040_0770"/>
<dbReference type="eggNOG" id="COG0343">
    <property type="taxonomic scope" value="Bacteria"/>
</dbReference>
<dbReference type="HOGENOM" id="CLU_022060_0_1_5"/>
<dbReference type="OrthoDB" id="9805417at2"/>
<dbReference type="UniPathway" id="UPA00392"/>
<dbReference type="Proteomes" id="UP000000636">
    <property type="component" value="Chromosome"/>
</dbReference>
<dbReference type="GO" id="GO:0005829">
    <property type="term" value="C:cytosol"/>
    <property type="evidence" value="ECO:0007669"/>
    <property type="project" value="TreeGrafter"/>
</dbReference>
<dbReference type="GO" id="GO:0046872">
    <property type="term" value="F:metal ion binding"/>
    <property type="evidence" value="ECO:0007669"/>
    <property type="project" value="UniProtKB-KW"/>
</dbReference>
<dbReference type="GO" id="GO:0008479">
    <property type="term" value="F:tRNA-guanosine(34) queuine transglycosylase activity"/>
    <property type="evidence" value="ECO:0007669"/>
    <property type="project" value="UniProtKB-UniRule"/>
</dbReference>
<dbReference type="GO" id="GO:0008616">
    <property type="term" value="P:queuosine biosynthetic process"/>
    <property type="evidence" value="ECO:0007669"/>
    <property type="project" value="UniProtKB-UniRule"/>
</dbReference>
<dbReference type="GO" id="GO:0002099">
    <property type="term" value="P:tRNA wobble guanine modification"/>
    <property type="evidence" value="ECO:0007669"/>
    <property type="project" value="TreeGrafter"/>
</dbReference>
<dbReference type="GO" id="GO:0101030">
    <property type="term" value="P:tRNA-guanine transglycosylation"/>
    <property type="evidence" value="ECO:0007669"/>
    <property type="project" value="InterPro"/>
</dbReference>
<dbReference type="FunFam" id="3.20.20.105:FF:000001">
    <property type="entry name" value="Queuine tRNA-ribosyltransferase"/>
    <property type="match status" value="1"/>
</dbReference>
<dbReference type="Gene3D" id="3.20.20.105">
    <property type="entry name" value="Queuine tRNA-ribosyltransferase-like"/>
    <property type="match status" value="1"/>
</dbReference>
<dbReference type="HAMAP" id="MF_00168">
    <property type="entry name" value="Q_tRNA_Tgt"/>
    <property type="match status" value="1"/>
</dbReference>
<dbReference type="InterPro" id="IPR050076">
    <property type="entry name" value="ArchSynthase1/Queuine_TRR"/>
</dbReference>
<dbReference type="InterPro" id="IPR004803">
    <property type="entry name" value="TGT"/>
</dbReference>
<dbReference type="InterPro" id="IPR036511">
    <property type="entry name" value="TGT-like_sf"/>
</dbReference>
<dbReference type="InterPro" id="IPR002616">
    <property type="entry name" value="tRNA_ribo_trans-like"/>
</dbReference>
<dbReference type="NCBIfam" id="TIGR00430">
    <property type="entry name" value="Q_tRNA_tgt"/>
    <property type="match status" value="1"/>
</dbReference>
<dbReference type="NCBIfam" id="TIGR00449">
    <property type="entry name" value="tgt_general"/>
    <property type="match status" value="1"/>
</dbReference>
<dbReference type="PANTHER" id="PTHR46499">
    <property type="entry name" value="QUEUINE TRNA-RIBOSYLTRANSFERASE"/>
    <property type="match status" value="1"/>
</dbReference>
<dbReference type="PANTHER" id="PTHR46499:SF1">
    <property type="entry name" value="QUEUINE TRNA-RIBOSYLTRANSFERASE"/>
    <property type="match status" value="1"/>
</dbReference>
<dbReference type="Pfam" id="PF01702">
    <property type="entry name" value="TGT"/>
    <property type="match status" value="1"/>
</dbReference>
<dbReference type="SUPFAM" id="SSF51713">
    <property type="entry name" value="tRNA-guanine transglycosylase"/>
    <property type="match status" value="1"/>
</dbReference>
<organism>
    <name type="scientific">Ruegeria sp. (strain TM1040)</name>
    <name type="common">Silicibacter sp.</name>
    <dbReference type="NCBI Taxonomy" id="292414"/>
    <lineage>
        <taxon>Bacteria</taxon>
        <taxon>Pseudomonadati</taxon>
        <taxon>Pseudomonadota</taxon>
        <taxon>Alphaproteobacteria</taxon>
        <taxon>Rhodobacterales</taxon>
        <taxon>Roseobacteraceae</taxon>
        <taxon>Ruegeria</taxon>
    </lineage>
</organism>
<reference key="1">
    <citation type="submission" date="2006-05" db="EMBL/GenBank/DDBJ databases">
        <title>Complete sequence of chromosome of Silicibacter sp. TM1040.</title>
        <authorList>
            <consortium name="US DOE Joint Genome Institute"/>
            <person name="Copeland A."/>
            <person name="Lucas S."/>
            <person name="Lapidus A."/>
            <person name="Barry K."/>
            <person name="Detter J.C."/>
            <person name="Glavina del Rio T."/>
            <person name="Hammon N."/>
            <person name="Israni S."/>
            <person name="Dalin E."/>
            <person name="Tice H."/>
            <person name="Pitluck S."/>
            <person name="Brettin T."/>
            <person name="Bruce D."/>
            <person name="Han C."/>
            <person name="Tapia R."/>
            <person name="Goodwin L."/>
            <person name="Thompson L.S."/>
            <person name="Gilna P."/>
            <person name="Schmutz J."/>
            <person name="Larimer F."/>
            <person name="Land M."/>
            <person name="Hauser L."/>
            <person name="Kyrpides N."/>
            <person name="Kim E."/>
            <person name="Belas R."/>
            <person name="Moran M.A."/>
            <person name="Buchan A."/>
            <person name="Gonzalez J.M."/>
            <person name="Schell M.A."/>
            <person name="Sun F."/>
            <person name="Richardson P."/>
        </authorList>
    </citation>
    <scope>NUCLEOTIDE SEQUENCE [LARGE SCALE GENOMIC DNA]</scope>
    <source>
        <strain>TM1040</strain>
    </source>
</reference>
<sequence>MAELFNFEMTATDGKARTGVIHTPRGEIRTPAFMPVGTAATVKAMMPESVRATGADILLGNTYHLMLRPTAERIDRLGGLHKFMNWDRPILTDSGGFQVMSLAGLRKLTEKGVTFKSHIDGSRHELTPERSMEIQRLLGSDIVMCFDECPALPADRDRIAESMRLSMRWAERSREAFGDRPGHALFGIQQGGLEQDFREESAEALTKIGFDGYAVGGLAVGEGQEAMFGCLDYAPDMLPVDKPRYLMGVGKPDDIVGAVSRGIDMMDCVLPSRSGRTGQAFTRHGVVNIKNARHQDDPRPLDENCSCPACSNYSRAYLHHVFRSNEMISGMLLTWHNLHYFQDIMAGMRESIAAGTFEAWQKTFHETRAQGDIEPL</sequence>
<keyword id="KW-0328">Glycosyltransferase</keyword>
<keyword id="KW-0479">Metal-binding</keyword>
<keyword id="KW-0671">Queuosine biosynthesis</keyword>
<keyword id="KW-1185">Reference proteome</keyword>
<keyword id="KW-0808">Transferase</keyword>
<keyword id="KW-0819">tRNA processing</keyword>
<keyword id="KW-0862">Zinc</keyword>
<comment type="function">
    <text evidence="1">Catalyzes the base-exchange of a guanine (G) residue with the queuine precursor 7-aminomethyl-7-deazaguanine (PreQ1) at position 34 (anticodon wobble position) in tRNAs with GU(N) anticodons (tRNA-Asp, -Asn, -His and -Tyr). Catalysis occurs through a double-displacement mechanism. The nucleophile active site attacks the C1' of nucleotide 34 to detach the guanine base from the RNA, forming a covalent enzyme-RNA intermediate. The proton acceptor active site deprotonates the incoming PreQ1, allowing a nucleophilic attack on the C1' of the ribose to form the product. After dissociation, two additional enzymatic reactions on the tRNA convert PreQ1 to queuine (Q), resulting in the hypermodified nucleoside queuosine (7-(((4,5-cis-dihydroxy-2-cyclopenten-1-yl)amino)methyl)-7-deazaguanosine).</text>
</comment>
<comment type="catalytic activity">
    <reaction evidence="1">
        <text>7-aminomethyl-7-carbaguanine + guanosine(34) in tRNA = 7-aminomethyl-7-carbaguanosine(34) in tRNA + guanine</text>
        <dbReference type="Rhea" id="RHEA:24104"/>
        <dbReference type="Rhea" id="RHEA-COMP:10341"/>
        <dbReference type="Rhea" id="RHEA-COMP:10342"/>
        <dbReference type="ChEBI" id="CHEBI:16235"/>
        <dbReference type="ChEBI" id="CHEBI:58703"/>
        <dbReference type="ChEBI" id="CHEBI:74269"/>
        <dbReference type="ChEBI" id="CHEBI:82833"/>
        <dbReference type="EC" id="2.4.2.29"/>
    </reaction>
</comment>
<comment type="cofactor">
    <cofactor evidence="1">
        <name>Zn(2+)</name>
        <dbReference type="ChEBI" id="CHEBI:29105"/>
    </cofactor>
    <text evidence="1">Binds 1 zinc ion per subunit.</text>
</comment>
<comment type="pathway">
    <text evidence="1">tRNA modification; tRNA-queuosine biosynthesis.</text>
</comment>
<comment type="subunit">
    <text evidence="1">Homodimer. Within each dimer, one monomer is responsible for RNA recognition and catalysis, while the other monomer binds to the replacement base PreQ1.</text>
</comment>
<comment type="similarity">
    <text evidence="1">Belongs to the queuine tRNA-ribosyltransferase family.</text>
</comment>
<feature type="chain" id="PRO_1000016858" description="Queuine tRNA-ribosyltransferase">
    <location>
        <begin position="1"/>
        <end position="376"/>
    </location>
</feature>
<feature type="region of interest" description="RNA binding" evidence="1">
    <location>
        <begin position="248"/>
        <end position="254"/>
    </location>
</feature>
<feature type="active site" description="Proton acceptor" evidence="1">
    <location>
        <position position="93"/>
    </location>
</feature>
<feature type="active site" description="Nucleophile" evidence="1">
    <location>
        <position position="267"/>
    </location>
</feature>
<feature type="binding site" evidence="1">
    <location>
        <begin position="93"/>
        <end position="97"/>
    </location>
    <ligand>
        <name>substrate</name>
    </ligand>
</feature>
<feature type="binding site" evidence="1">
    <location>
        <position position="147"/>
    </location>
    <ligand>
        <name>substrate</name>
    </ligand>
</feature>
<feature type="binding site" evidence="1">
    <location>
        <position position="190"/>
    </location>
    <ligand>
        <name>substrate</name>
    </ligand>
</feature>
<feature type="binding site" evidence="1">
    <location>
        <position position="217"/>
    </location>
    <ligand>
        <name>substrate</name>
    </ligand>
</feature>
<feature type="binding site" evidence="1">
    <location>
        <position position="305"/>
    </location>
    <ligand>
        <name>Zn(2+)</name>
        <dbReference type="ChEBI" id="CHEBI:29105"/>
    </ligand>
</feature>
<feature type="binding site" evidence="1">
    <location>
        <position position="307"/>
    </location>
    <ligand>
        <name>Zn(2+)</name>
        <dbReference type="ChEBI" id="CHEBI:29105"/>
    </ligand>
</feature>
<feature type="binding site" evidence="1">
    <location>
        <position position="310"/>
    </location>
    <ligand>
        <name>Zn(2+)</name>
        <dbReference type="ChEBI" id="CHEBI:29105"/>
    </ligand>
</feature>
<feature type="binding site" evidence="1">
    <location>
        <position position="336"/>
    </location>
    <ligand>
        <name>Zn(2+)</name>
        <dbReference type="ChEBI" id="CHEBI:29105"/>
    </ligand>
</feature>
<proteinExistence type="inferred from homology"/>
<evidence type="ECO:0000255" key="1">
    <source>
        <dbReference type="HAMAP-Rule" id="MF_00168"/>
    </source>
</evidence>